<keyword id="KW-1185">Reference proteome</keyword>
<keyword id="KW-0949">S-adenosyl-L-methionine</keyword>
<keyword id="KW-0808">Transferase</keyword>
<feature type="chain" id="PRO_0000381955" description="Carboxy-S-adenosyl-L-methionine synthase">
    <location>
        <begin position="1"/>
        <end position="234"/>
    </location>
</feature>
<feature type="binding site" evidence="1">
    <location>
        <position position="35"/>
    </location>
    <ligand>
        <name>S-adenosyl-L-methionine</name>
        <dbReference type="ChEBI" id="CHEBI:59789"/>
    </ligand>
</feature>
<feature type="binding site" evidence="1">
    <location>
        <begin position="60"/>
        <end position="62"/>
    </location>
    <ligand>
        <name>S-adenosyl-L-methionine</name>
        <dbReference type="ChEBI" id="CHEBI:59789"/>
    </ligand>
</feature>
<feature type="binding site" evidence="1">
    <location>
        <begin position="109"/>
        <end position="110"/>
    </location>
    <ligand>
        <name>S-adenosyl-L-methionine</name>
        <dbReference type="ChEBI" id="CHEBI:59789"/>
    </ligand>
</feature>
<feature type="binding site" evidence="1">
    <location>
        <position position="124"/>
    </location>
    <ligand>
        <name>S-adenosyl-L-methionine</name>
        <dbReference type="ChEBI" id="CHEBI:59789"/>
    </ligand>
</feature>
<feature type="binding site" evidence="1">
    <location>
        <position position="191"/>
    </location>
    <ligand>
        <name>S-adenosyl-L-methionine</name>
        <dbReference type="ChEBI" id="CHEBI:59789"/>
    </ligand>
</feature>
<evidence type="ECO:0000255" key="1">
    <source>
        <dbReference type="HAMAP-Rule" id="MF_01589"/>
    </source>
</evidence>
<proteinExistence type="inferred from homology"/>
<dbReference type="EC" id="2.1.3.-" evidence="1"/>
<dbReference type="EMBL" id="CP000767">
    <property type="protein sequence ID" value="EAU00674.1"/>
    <property type="molecule type" value="Genomic_DNA"/>
</dbReference>
<dbReference type="RefSeq" id="WP_011992142.1">
    <property type="nucleotide sequence ID" value="NC_009715.2"/>
</dbReference>
<dbReference type="SMR" id="A7GXS7"/>
<dbReference type="STRING" id="360105.CCV52592_1562"/>
<dbReference type="KEGG" id="ccv:CCV52592_1562"/>
<dbReference type="HOGENOM" id="CLU_078475_0_0_7"/>
<dbReference type="OrthoDB" id="5386938at2"/>
<dbReference type="Proteomes" id="UP000006380">
    <property type="component" value="Chromosome"/>
</dbReference>
<dbReference type="GO" id="GO:0016743">
    <property type="term" value="F:carboxyl- or carbamoyltransferase activity"/>
    <property type="evidence" value="ECO:0007669"/>
    <property type="project" value="UniProtKB-UniRule"/>
</dbReference>
<dbReference type="GO" id="GO:1904047">
    <property type="term" value="F:S-adenosyl-L-methionine binding"/>
    <property type="evidence" value="ECO:0007669"/>
    <property type="project" value="UniProtKB-UniRule"/>
</dbReference>
<dbReference type="GO" id="GO:0002098">
    <property type="term" value="P:tRNA wobble uridine modification"/>
    <property type="evidence" value="ECO:0007669"/>
    <property type="project" value="InterPro"/>
</dbReference>
<dbReference type="CDD" id="cd02440">
    <property type="entry name" value="AdoMet_MTases"/>
    <property type="match status" value="1"/>
</dbReference>
<dbReference type="Gene3D" id="3.40.50.150">
    <property type="entry name" value="Vaccinia Virus protein VP39"/>
    <property type="match status" value="1"/>
</dbReference>
<dbReference type="HAMAP" id="MF_01589">
    <property type="entry name" value="Cx_SAM_synthase"/>
    <property type="match status" value="1"/>
</dbReference>
<dbReference type="InterPro" id="IPR005271">
    <property type="entry name" value="CmoA"/>
</dbReference>
<dbReference type="InterPro" id="IPR041698">
    <property type="entry name" value="Methyltransf_25"/>
</dbReference>
<dbReference type="InterPro" id="IPR029063">
    <property type="entry name" value="SAM-dependent_MTases_sf"/>
</dbReference>
<dbReference type="NCBIfam" id="TIGR00740">
    <property type="entry name" value="carboxy-S-adenosyl-L-methionine synthase CmoA"/>
    <property type="match status" value="1"/>
</dbReference>
<dbReference type="PANTHER" id="PTHR43861:SF2">
    <property type="entry name" value="CARBOXY-S-ADENOSYL-L-METHIONINE SYNTHASE"/>
    <property type="match status" value="1"/>
</dbReference>
<dbReference type="PANTHER" id="PTHR43861">
    <property type="entry name" value="TRANS-ACONITATE 2-METHYLTRANSFERASE-RELATED"/>
    <property type="match status" value="1"/>
</dbReference>
<dbReference type="Pfam" id="PF13649">
    <property type="entry name" value="Methyltransf_25"/>
    <property type="match status" value="1"/>
</dbReference>
<dbReference type="PIRSF" id="PIRSF006325">
    <property type="entry name" value="MeTrfase_bac"/>
    <property type="match status" value="1"/>
</dbReference>
<dbReference type="SUPFAM" id="SSF53335">
    <property type="entry name" value="S-adenosyl-L-methionine-dependent methyltransferases"/>
    <property type="match status" value="1"/>
</dbReference>
<accession>A7GXS7</accession>
<protein>
    <recommendedName>
        <fullName evidence="1">Carboxy-S-adenosyl-L-methionine synthase</fullName>
        <shortName evidence="1">Cx-SAM synthase</shortName>
        <ecNumber evidence="1">2.1.3.-</ecNumber>
    </recommendedName>
</protein>
<sequence>MRDEIFKEPIKKQFEFDDFVVSVFDDMIGRSVPFYDVSGKLVSEILAKILPAKAHVIDLGCSTATSLLLLNQLRDDLVLEGVDSSSAMIENARKKAKAYGAKIKFSVGDVLESQICQMDAVMMNYTLQFIRPPKRAQLVKSIYDGLNEGGVFVFSEKIIYEDKKFAKNMIEIYENYKEKQGYSRYEIAQKREALENVLIPYTEEENRTLALGAGFKRVESVFKWGNFMTFLAFK</sequence>
<name>CMOA_CAMC5</name>
<reference key="1">
    <citation type="submission" date="2007-07" db="EMBL/GenBank/DDBJ databases">
        <title>Genome sequence of Campylobacter curvus 525.92 isolated from human feces.</title>
        <authorList>
            <person name="Fouts D.E."/>
            <person name="Mongodin E.F."/>
            <person name="Puiu D."/>
            <person name="Sebastian Y."/>
            <person name="Miller W.G."/>
            <person name="Mandrell R.E."/>
            <person name="Lastovica A.J."/>
            <person name="Nelson K.E."/>
        </authorList>
    </citation>
    <scope>NUCLEOTIDE SEQUENCE [LARGE SCALE GENOMIC DNA]</scope>
    <source>
        <strain>525.92</strain>
    </source>
</reference>
<gene>
    <name evidence="1" type="primary">cmoA</name>
    <name type="ordered locus">Ccur92_07150</name>
    <name type="ORF">CCV52592_1562</name>
</gene>
<comment type="function">
    <text evidence="1">Catalyzes the conversion of S-adenosyl-L-methionine (SAM) to carboxy-S-adenosyl-L-methionine (Cx-SAM).</text>
</comment>
<comment type="catalytic activity">
    <reaction evidence="1">
        <text>prephenate + S-adenosyl-L-methionine = carboxy-S-adenosyl-L-methionine + 3-phenylpyruvate + H2O</text>
        <dbReference type="Rhea" id="RHEA:51692"/>
        <dbReference type="ChEBI" id="CHEBI:15377"/>
        <dbReference type="ChEBI" id="CHEBI:18005"/>
        <dbReference type="ChEBI" id="CHEBI:29934"/>
        <dbReference type="ChEBI" id="CHEBI:59789"/>
        <dbReference type="ChEBI" id="CHEBI:134278"/>
    </reaction>
</comment>
<comment type="subunit">
    <text evidence="1">Homodimer.</text>
</comment>
<comment type="similarity">
    <text evidence="1">Belongs to the class I-like SAM-binding methyltransferase superfamily. Cx-SAM synthase family.</text>
</comment>
<organism>
    <name type="scientific">Campylobacter curvus (strain 525.92)</name>
    <dbReference type="NCBI Taxonomy" id="360105"/>
    <lineage>
        <taxon>Bacteria</taxon>
        <taxon>Pseudomonadati</taxon>
        <taxon>Campylobacterota</taxon>
        <taxon>Epsilonproteobacteria</taxon>
        <taxon>Campylobacterales</taxon>
        <taxon>Campylobacteraceae</taxon>
        <taxon>Campylobacter</taxon>
    </lineage>
</organism>